<dbReference type="EMBL" id="CP001150">
    <property type="protein sequence ID" value="ACM01188.1"/>
    <property type="molecule type" value="Genomic_DNA"/>
</dbReference>
<dbReference type="RefSeq" id="WP_002720163.1">
    <property type="nucleotide sequence ID" value="NC_011963.1"/>
</dbReference>
<dbReference type="SMR" id="B9KT42"/>
<dbReference type="GeneID" id="67446747"/>
<dbReference type="KEGG" id="rsk:RSKD131_1328"/>
<dbReference type="HOGENOM" id="CLU_046483_2_0_5"/>
<dbReference type="GO" id="GO:0022627">
    <property type="term" value="C:cytosolic small ribosomal subunit"/>
    <property type="evidence" value="ECO:0007669"/>
    <property type="project" value="TreeGrafter"/>
</dbReference>
<dbReference type="GO" id="GO:0003723">
    <property type="term" value="F:RNA binding"/>
    <property type="evidence" value="ECO:0007669"/>
    <property type="project" value="TreeGrafter"/>
</dbReference>
<dbReference type="GO" id="GO:0003735">
    <property type="term" value="F:structural constituent of ribosome"/>
    <property type="evidence" value="ECO:0007669"/>
    <property type="project" value="InterPro"/>
</dbReference>
<dbReference type="GO" id="GO:0006412">
    <property type="term" value="P:translation"/>
    <property type="evidence" value="ECO:0007669"/>
    <property type="project" value="UniProtKB-UniRule"/>
</dbReference>
<dbReference type="FunFam" id="3.30.230.10:FF:000001">
    <property type="entry name" value="30S ribosomal protein S9"/>
    <property type="match status" value="1"/>
</dbReference>
<dbReference type="Gene3D" id="3.30.230.10">
    <property type="match status" value="1"/>
</dbReference>
<dbReference type="HAMAP" id="MF_00532_B">
    <property type="entry name" value="Ribosomal_uS9_B"/>
    <property type="match status" value="1"/>
</dbReference>
<dbReference type="InterPro" id="IPR020568">
    <property type="entry name" value="Ribosomal_Su5_D2-typ_SF"/>
</dbReference>
<dbReference type="InterPro" id="IPR000754">
    <property type="entry name" value="Ribosomal_uS9"/>
</dbReference>
<dbReference type="InterPro" id="IPR023035">
    <property type="entry name" value="Ribosomal_uS9_bac/plastid"/>
</dbReference>
<dbReference type="InterPro" id="IPR020574">
    <property type="entry name" value="Ribosomal_uS9_CS"/>
</dbReference>
<dbReference type="InterPro" id="IPR014721">
    <property type="entry name" value="Ribsml_uS5_D2-typ_fold_subgr"/>
</dbReference>
<dbReference type="NCBIfam" id="NF001099">
    <property type="entry name" value="PRK00132.1"/>
    <property type="match status" value="1"/>
</dbReference>
<dbReference type="PANTHER" id="PTHR21569">
    <property type="entry name" value="RIBOSOMAL PROTEIN S9"/>
    <property type="match status" value="1"/>
</dbReference>
<dbReference type="PANTHER" id="PTHR21569:SF1">
    <property type="entry name" value="SMALL RIBOSOMAL SUBUNIT PROTEIN US9M"/>
    <property type="match status" value="1"/>
</dbReference>
<dbReference type="Pfam" id="PF00380">
    <property type="entry name" value="Ribosomal_S9"/>
    <property type="match status" value="1"/>
</dbReference>
<dbReference type="SUPFAM" id="SSF54211">
    <property type="entry name" value="Ribosomal protein S5 domain 2-like"/>
    <property type="match status" value="1"/>
</dbReference>
<dbReference type="PROSITE" id="PS00360">
    <property type="entry name" value="RIBOSOMAL_S9"/>
    <property type="match status" value="1"/>
</dbReference>
<protein>
    <recommendedName>
        <fullName evidence="1">Small ribosomal subunit protein uS9</fullName>
    </recommendedName>
    <alternativeName>
        <fullName evidence="2">30S ribosomal protein S9</fullName>
    </alternativeName>
</protein>
<organism>
    <name type="scientific">Cereibacter sphaeroides (strain KD131 / KCTC 12085)</name>
    <name type="common">Rhodobacter sphaeroides</name>
    <dbReference type="NCBI Taxonomy" id="557760"/>
    <lineage>
        <taxon>Bacteria</taxon>
        <taxon>Pseudomonadati</taxon>
        <taxon>Pseudomonadota</taxon>
        <taxon>Alphaproteobacteria</taxon>
        <taxon>Rhodobacterales</taxon>
        <taxon>Paracoccaceae</taxon>
        <taxon>Cereibacter</taxon>
    </lineage>
</organism>
<accession>B9KT42</accession>
<reference key="1">
    <citation type="journal article" date="2009" name="J. Bacteriol.">
        <title>Complete genome sequence of Rhodobacter sphaeroides KD131.</title>
        <authorList>
            <person name="Lim S.-K."/>
            <person name="Kim S.J."/>
            <person name="Cha S.H."/>
            <person name="Oh Y.-K."/>
            <person name="Rhee H.-J."/>
            <person name="Kim M.-S."/>
            <person name="Lee J.K."/>
        </authorList>
    </citation>
    <scope>NUCLEOTIDE SEQUENCE [LARGE SCALE GENOMIC DNA]</scope>
    <source>
        <strain>KD131 / KCTC 12085</strain>
    </source>
</reference>
<comment type="similarity">
    <text evidence="1">Belongs to the universal ribosomal protein uS9 family.</text>
</comment>
<name>RS9_CERSK</name>
<sequence>MSDIKSLDDLKSVVGEAPVAEVAIAREPVRDSLGRSYATGKRKDAVARVWIKPGSGKVTVNGKPMDEYFARPVLQMILRQPFKVANVEGQFDVMATVAGGGLSGQAGAVKHGISKALQLYEPALRAALKAAGFLTRDSRVVERKKYGKAKARRSFQFSKR</sequence>
<evidence type="ECO:0000255" key="1">
    <source>
        <dbReference type="HAMAP-Rule" id="MF_00532"/>
    </source>
</evidence>
<evidence type="ECO:0000305" key="2"/>
<feature type="chain" id="PRO_1000146467" description="Small ribosomal subunit protein uS9">
    <location>
        <begin position="1"/>
        <end position="160"/>
    </location>
</feature>
<keyword id="KW-0687">Ribonucleoprotein</keyword>
<keyword id="KW-0689">Ribosomal protein</keyword>
<gene>
    <name evidence="1" type="primary">rpsI</name>
    <name type="ordered locus">RSKD131_1328</name>
</gene>
<proteinExistence type="inferred from homology"/>